<reference key="1">
    <citation type="journal article" date="2001" name="Nature">
        <title>Complete genome sequence of Salmonella enterica serovar Typhimurium LT2.</title>
        <authorList>
            <person name="McClelland M."/>
            <person name="Sanderson K.E."/>
            <person name="Spieth J."/>
            <person name="Clifton S.W."/>
            <person name="Latreille P."/>
            <person name="Courtney L."/>
            <person name="Porwollik S."/>
            <person name="Ali J."/>
            <person name="Dante M."/>
            <person name="Du F."/>
            <person name="Hou S."/>
            <person name="Layman D."/>
            <person name="Leonard S."/>
            <person name="Nguyen C."/>
            <person name="Scott K."/>
            <person name="Holmes A."/>
            <person name="Grewal N."/>
            <person name="Mulvaney E."/>
            <person name="Ryan E."/>
            <person name="Sun H."/>
            <person name="Florea L."/>
            <person name="Miller W."/>
            <person name="Stoneking T."/>
            <person name="Nhan M."/>
            <person name="Waterston R."/>
            <person name="Wilson R.K."/>
        </authorList>
    </citation>
    <scope>NUCLEOTIDE SEQUENCE [LARGE SCALE GENOMIC DNA]</scope>
    <source>
        <strain>LT2 / SGSC1412 / ATCC 700720</strain>
    </source>
</reference>
<dbReference type="EMBL" id="AE006468">
    <property type="protein sequence ID" value="AAL22051.1"/>
    <property type="molecule type" value="Genomic_DNA"/>
</dbReference>
<dbReference type="RefSeq" id="WP_001221574.1">
    <property type="nucleotide sequence ID" value="NC_003197.2"/>
</dbReference>
<dbReference type="SMR" id="P66795"/>
<dbReference type="STRING" id="99287.STM3177"/>
<dbReference type="PaxDb" id="99287-STM3177"/>
<dbReference type="KEGG" id="stm:STM3177"/>
<dbReference type="PATRIC" id="fig|99287.12.peg.3368"/>
<dbReference type="HOGENOM" id="CLU_000445_30_1_6"/>
<dbReference type="PhylomeDB" id="P66795"/>
<dbReference type="BioCyc" id="SENT99287:STM3177-MONOMER"/>
<dbReference type="Proteomes" id="UP000001014">
    <property type="component" value="Chromosome"/>
</dbReference>
<dbReference type="GO" id="GO:0005829">
    <property type="term" value="C:cytosol"/>
    <property type="evidence" value="ECO:0000318"/>
    <property type="project" value="GO_Central"/>
</dbReference>
<dbReference type="GO" id="GO:0032993">
    <property type="term" value="C:protein-DNA complex"/>
    <property type="evidence" value="ECO:0000318"/>
    <property type="project" value="GO_Central"/>
</dbReference>
<dbReference type="GO" id="GO:0000156">
    <property type="term" value="F:phosphorelay response regulator activity"/>
    <property type="evidence" value="ECO:0000318"/>
    <property type="project" value="GO_Central"/>
</dbReference>
<dbReference type="GO" id="GO:0000976">
    <property type="term" value="F:transcription cis-regulatory region binding"/>
    <property type="evidence" value="ECO:0000318"/>
    <property type="project" value="GO_Central"/>
</dbReference>
<dbReference type="GO" id="GO:0006355">
    <property type="term" value="P:regulation of DNA-templated transcription"/>
    <property type="evidence" value="ECO:0000318"/>
    <property type="project" value="GO_Central"/>
</dbReference>
<dbReference type="CDD" id="cd17624">
    <property type="entry name" value="REC_OmpR_PmrA-like"/>
    <property type="match status" value="1"/>
</dbReference>
<dbReference type="CDD" id="cd00383">
    <property type="entry name" value="trans_reg_C"/>
    <property type="match status" value="1"/>
</dbReference>
<dbReference type="FunFam" id="3.40.50.2300:FF:000002">
    <property type="entry name" value="DNA-binding response regulator PhoP"/>
    <property type="match status" value="1"/>
</dbReference>
<dbReference type="FunFam" id="1.10.10.10:FF:000005">
    <property type="entry name" value="Two-component system response regulator"/>
    <property type="match status" value="1"/>
</dbReference>
<dbReference type="Gene3D" id="3.40.50.2300">
    <property type="match status" value="1"/>
</dbReference>
<dbReference type="Gene3D" id="6.10.250.690">
    <property type="match status" value="1"/>
</dbReference>
<dbReference type="Gene3D" id="1.10.10.10">
    <property type="entry name" value="Winged helix-like DNA-binding domain superfamily/Winged helix DNA-binding domain"/>
    <property type="match status" value="1"/>
</dbReference>
<dbReference type="InterPro" id="IPR011006">
    <property type="entry name" value="CheY-like_superfamily"/>
</dbReference>
<dbReference type="InterPro" id="IPR001867">
    <property type="entry name" value="OmpR/PhoB-type_DNA-bd"/>
</dbReference>
<dbReference type="InterPro" id="IPR016032">
    <property type="entry name" value="Sig_transdc_resp-reg_C-effctor"/>
</dbReference>
<dbReference type="InterPro" id="IPR001789">
    <property type="entry name" value="Sig_transdc_resp-reg_receiver"/>
</dbReference>
<dbReference type="InterPro" id="IPR039420">
    <property type="entry name" value="WalR-like"/>
</dbReference>
<dbReference type="InterPro" id="IPR036388">
    <property type="entry name" value="WH-like_DNA-bd_sf"/>
</dbReference>
<dbReference type="NCBIfam" id="NF007663">
    <property type="entry name" value="PRK10336.1"/>
    <property type="match status" value="1"/>
</dbReference>
<dbReference type="PANTHER" id="PTHR48111">
    <property type="entry name" value="REGULATOR OF RPOS"/>
    <property type="match status" value="1"/>
</dbReference>
<dbReference type="PANTHER" id="PTHR48111:SF35">
    <property type="entry name" value="TRANSCRIPTIONAL REGULATORY PROTEIN QSEB"/>
    <property type="match status" value="1"/>
</dbReference>
<dbReference type="Pfam" id="PF00072">
    <property type="entry name" value="Response_reg"/>
    <property type="match status" value="1"/>
</dbReference>
<dbReference type="Pfam" id="PF00486">
    <property type="entry name" value="Trans_reg_C"/>
    <property type="match status" value="1"/>
</dbReference>
<dbReference type="SMART" id="SM00448">
    <property type="entry name" value="REC"/>
    <property type="match status" value="1"/>
</dbReference>
<dbReference type="SMART" id="SM00862">
    <property type="entry name" value="Trans_reg_C"/>
    <property type="match status" value="1"/>
</dbReference>
<dbReference type="SUPFAM" id="SSF46894">
    <property type="entry name" value="C-terminal effector domain of the bipartite response regulators"/>
    <property type="match status" value="1"/>
</dbReference>
<dbReference type="SUPFAM" id="SSF52172">
    <property type="entry name" value="CheY-like"/>
    <property type="match status" value="1"/>
</dbReference>
<dbReference type="PROSITE" id="PS51755">
    <property type="entry name" value="OMPR_PHOB"/>
    <property type="match status" value="1"/>
</dbReference>
<dbReference type="PROSITE" id="PS50110">
    <property type="entry name" value="RESPONSE_REGULATORY"/>
    <property type="match status" value="1"/>
</dbReference>
<proteinExistence type="inferred from homology"/>
<protein>
    <recommendedName>
        <fullName>Transcriptional regulatory protein QseB</fullName>
    </recommendedName>
</protein>
<keyword id="KW-0010">Activator</keyword>
<keyword id="KW-0963">Cytoplasm</keyword>
<keyword id="KW-0238">DNA-binding</keyword>
<keyword id="KW-0597">Phosphoprotein</keyword>
<keyword id="KW-1185">Reference proteome</keyword>
<keyword id="KW-0804">Transcription</keyword>
<keyword id="KW-0805">Transcription regulation</keyword>
<keyword id="KW-0902">Two-component regulatory system</keyword>
<gene>
    <name type="primary">qseB</name>
    <name type="ordered locus">STM3177</name>
</gene>
<organism>
    <name type="scientific">Salmonella typhimurium (strain LT2 / SGSC1412 / ATCC 700720)</name>
    <dbReference type="NCBI Taxonomy" id="99287"/>
    <lineage>
        <taxon>Bacteria</taxon>
        <taxon>Pseudomonadati</taxon>
        <taxon>Pseudomonadota</taxon>
        <taxon>Gammaproteobacteria</taxon>
        <taxon>Enterobacterales</taxon>
        <taxon>Enterobacteriaceae</taxon>
        <taxon>Salmonella</taxon>
    </lineage>
</organism>
<feature type="chain" id="PRO_0000081028" description="Transcriptional regulatory protein QseB">
    <location>
        <begin position="1"/>
        <end position="219"/>
    </location>
</feature>
<feature type="domain" description="Response regulatory" evidence="2">
    <location>
        <begin position="2"/>
        <end position="116"/>
    </location>
</feature>
<feature type="DNA-binding region" description="OmpR/PhoB-type" evidence="3">
    <location>
        <begin position="124"/>
        <end position="218"/>
    </location>
</feature>
<feature type="modified residue" description="4-aspartylphosphate" evidence="2">
    <location>
        <position position="51"/>
    </location>
</feature>
<sequence length="219" mass="24274">MRILLVEDDTLIGDGIKAGLSKMGFSVDWFTEGRPGKEALYSAPYDAVILDLTLPGMDGRDILREWREKGKQEPVLILTARDALAERVEGLRLGADDYLCKPFALIEVAARLEALVRRASGQASSELRHGQVTLNPGNLVATLAGEPLALKPKEFALLELLLRNKGRVLPRKLIEEKLYNWDDDVSSNAVEVHVHHLRRKLGSEFIRTVHGIGYTLGDA</sequence>
<accession>P66795</accession>
<accession>Q8XEQ3</accession>
<evidence type="ECO:0000250" key="1"/>
<evidence type="ECO:0000255" key="2">
    <source>
        <dbReference type="PROSITE-ProRule" id="PRU00169"/>
    </source>
</evidence>
<evidence type="ECO:0000255" key="3">
    <source>
        <dbReference type="PROSITE-ProRule" id="PRU01091"/>
    </source>
</evidence>
<evidence type="ECO:0000305" key="4"/>
<name>QSEB_SALTY</name>
<comment type="function">
    <text evidence="1">Member of a two-component regulatory system QseB/QseC. Activates the flagella regulon by activating transcription of flhDC (By similarity).</text>
</comment>
<comment type="subcellular location">
    <subcellularLocation>
        <location evidence="4">Cytoplasm</location>
    </subcellularLocation>
</comment>
<comment type="PTM">
    <text evidence="4">Phosphorylated by QseC.</text>
</comment>